<feature type="chain" id="PRO_0000423786" description="Nuclear egress protein 1">
    <location>
        <begin position="1"/>
        <end position="302"/>
    </location>
</feature>
<feature type="zinc finger region" description="CCCH-type" evidence="1">
    <location>
        <begin position="102"/>
        <end position="227"/>
    </location>
</feature>
<feature type="region of interest" description="Disordered" evidence="2">
    <location>
        <begin position="1"/>
        <end position="22"/>
    </location>
</feature>
<feature type="compositionally biased region" description="Polar residues" evidence="2">
    <location>
        <begin position="1"/>
        <end position="17"/>
    </location>
</feature>
<name>NEC1_HHV8P</name>
<protein>
    <recommendedName>
        <fullName evidence="1">Nuclear egress protein 1</fullName>
    </recommendedName>
</protein>
<proteinExistence type="evidence at protein level"/>
<gene>
    <name evidence="1" type="primary">NEC1</name>
    <name type="ordered locus">ORF69</name>
</gene>
<organismHost>
    <name type="scientific">Homo sapiens</name>
    <name type="common">Human</name>
    <dbReference type="NCBI Taxonomy" id="9606"/>
</organismHost>
<reference key="1">
    <citation type="journal article" date="1999" name="J. Virol.">
        <title>Identification of a spliced gene from Kaposi's sarcoma-associated herpesvirus encoding a protein with similarities to latent membrane proteins 1 and 2A of Epstein-Barr virus.</title>
        <authorList>
            <person name="Glenn M."/>
            <person name="Rainbow L."/>
            <person name="Aurade F."/>
            <person name="Davison A."/>
            <person name="Schulz T.F."/>
        </authorList>
    </citation>
    <scope>NUCLEOTIDE SEQUENCE [LARGE SCALE GENOMIC DNA]</scope>
</reference>
<reference key="2">
    <citation type="journal article" date="2006" name="J. Gen. Virol.">
        <title>Kaposi's sarcoma-associated herpesvirus immune modulation: an overview.</title>
        <authorList>
            <person name="Rezaee S.A.R."/>
            <person name="Cunningham C."/>
            <person name="Davison A.J."/>
            <person name="Blackbourn D.J."/>
        </authorList>
    </citation>
    <scope>NUCLEOTIDE SEQUENCE [LARGE SCALE GENOMIC DNA]</scope>
</reference>
<reference key="3">
    <citation type="journal article" date="2013" name="J. Virol.">
        <title>Interactions of the Kaposi's Sarcoma-associated herpesvirus nuclear egress complex: ORF69 is a potent factor for remodeling cellular membranes.</title>
        <authorList>
            <person name="Luitweiler E.M."/>
            <person name="Henson B.W."/>
            <person name="Pryce E.N."/>
            <person name="Patel V."/>
            <person name="Coombs G."/>
            <person name="McCaffery J.M."/>
            <person name="Desai P.J."/>
        </authorList>
    </citation>
    <scope>FUNCTION</scope>
    <scope>SUBCELLULAR LOCATION</scope>
    <scope>INTERACTION WITH ORF67</scope>
</reference>
<sequence>MPKSVSSHISLATSTGRSGPRDIRRCLSSRLRSVPPGARSASVSSKHRNGLRKFISDKVFFSILSHRHELGVDFLREMETPICTSKTVMLPLDLSTVAPGRCVSLSPFGHSSNMGFQCALCPSTENPTVAQGSRPQTMVGDALKKNNELCSVALAFYHHADKVIQHKTFYLSLLSHSMDVVRQSFLQPGLLYANLVLKTFGHDPLPIFTTNNGMLTMCILFKTRALHLGETALRLLMDNLPNYKISADCCRQSYVVKFVPTHPDTASIAVQVHTICEAVAALDCTDEMRDDIQKGTALVNAL</sequence>
<organism>
    <name type="scientific">Human herpesvirus 8 type P (isolate GK18)</name>
    <name type="common">HHV-8</name>
    <name type="synonym">Kaposi's sarcoma-associated herpesvirus</name>
    <dbReference type="NCBI Taxonomy" id="868565"/>
    <lineage>
        <taxon>Viruses</taxon>
        <taxon>Duplodnaviria</taxon>
        <taxon>Heunggongvirae</taxon>
        <taxon>Peploviricota</taxon>
        <taxon>Herviviricetes</taxon>
        <taxon>Herpesvirales</taxon>
        <taxon>Orthoherpesviridae</taxon>
        <taxon>Gammaherpesvirinae</taxon>
        <taxon>Rhadinovirus</taxon>
        <taxon>Rhadinovirus humangamma8</taxon>
        <taxon>Human herpesvirus 8</taxon>
    </lineage>
</organism>
<keyword id="KW-1043">Host membrane</keyword>
<keyword id="KW-1048">Host nucleus</keyword>
<keyword id="KW-0472">Membrane</keyword>
<keyword id="KW-0479">Metal-binding</keyword>
<keyword id="KW-0597">Phosphoprotein</keyword>
<keyword id="KW-1185">Reference proteome</keyword>
<keyword id="KW-0862">Zinc</keyword>
<keyword id="KW-0863">Zinc-finger</keyword>
<accession>F5H982</accession>
<dbReference type="EMBL" id="AF148805">
    <property type="protein sequence ID" value="AAD46497.1"/>
    <property type="molecule type" value="Genomic_DNA"/>
</dbReference>
<dbReference type="RefSeq" id="YP_001129427.1">
    <property type="nucleotide sequence ID" value="NC_009333.1"/>
</dbReference>
<dbReference type="SMR" id="F5H982"/>
<dbReference type="BioGRID" id="1776947">
    <property type="interactions" value="16"/>
</dbReference>
<dbReference type="KEGG" id="vg:4961444"/>
<dbReference type="Proteomes" id="UP000000942">
    <property type="component" value="Segment"/>
</dbReference>
<dbReference type="GO" id="GO:0044201">
    <property type="term" value="C:host cell nuclear inner membrane"/>
    <property type="evidence" value="ECO:0007669"/>
    <property type="project" value="UniProtKB-SubCell"/>
</dbReference>
<dbReference type="GO" id="GO:0016020">
    <property type="term" value="C:membrane"/>
    <property type="evidence" value="ECO:0007669"/>
    <property type="project" value="UniProtKB-KW"/>
</dbReference>
<dbReference type="GO" id="GO:0008270">
    <property type="term" value="F:zinc ion binding"/>
    <property type="evidence" value="ECO:0007669"/>
    <property type="project" value="UniProtKB-KW"/>
</dbReference>
<dbReference type="GO" id="GO:0046765">
    <property type="term" value="P:viral budding from nuclear membrane"/>
    <property type="evidence" value="ECO:0007669"/>
    <property type="project" value="InterPro"/>
</dbReference>
<dbReference type="HAMAP" id="MF_04023">
    <property type="entry name" value="HSV_NEC1"/>
    <property type="match status" value="1"/>
</dbReference>
<dbReference type="InterPro" id="IPR021152">
    <property type="entry name" value="Herpes_UL31"/>
</dbReference>
<dbReference type="Pfam" id="PF02718">
    <property type="entry name" value="Herpes_UL31"/>
    <property type="match status" value="1"/>
</dbReference>
<comment type="function">
    <text evidence="1 3">Plays an essential role in virion nuclear egress, the first step of virion release from infected cell. Within the host nucleus, NEC1 interacts with the newly formed capsid through the vertexes and directs it to the inner nuclear membrane by associating with NEC2. Induces the budding of the capsid at the inner nuclear membrane as well as its envelopment into the perinuclear space. There, the NEC1/NEC2 complex promotes the fusion of the enveloped capsid with the outer nuclear membrane and the subsequent release of the viral capsid into the cytoplasm where it will reach the secondary budding sites in the host Golgi or trans-Golgi network.</text>
</comment>
<comment type="subunit">
    <text evidence="1">Forms a heterohexameric complex with NEC2. Interacts with capsid vertex specific component 2/CVC2; this interaction directs the capsid to the host inner nuclear membrane to initiate budding.</text>
</comment>
<comment type="subcellular location">
    <subcellularLocation>
        <location evidence="1 3">Host nucleus inner membrane</location>
    </subcellularLocation>
    <text evidence="1">Remains attached to the nucleus inner membrane through interaction with NEC2.</text>
</comment>
<comment type="PTM">
    <text evidence="1">Phosphorylated at serine residues in the N-terminus. This phosphorylation regulates the localization within the inner nuclear membrane.</text>
</comment>
<comment type="similarity">
    <text evidence="1">Belongs to the herpesviridae NEC1 protein family.</text>
</comment>
<evidence type="ECO:0000255" key="1">
    <source>
        <dbReference type="HAMAP-Rule" id="MF_04023"/>
    </source>
</evidence>
<evidence type="ECO:0000256" key="2">
    <source>
        <dbReference type="SAM" id="MobiDB-lite"/>
    </source>
</evidence>
<evidence type="ECO:0000269" key="3">
    <source>
    </source>
</evidence>